<feature type="chain" id="PRO_0000386420" description="Small toxic protein IbsA">
    <location>
        <begin position="1"/>
        <end position="19"/>
    </location>
</feature>
<gene>
    <name type="primary">ibsA</name>
    <name type="ordered locus">b4667</name>
    <name type="ordered locus">JW2058.1</name>
</gene>
<accession>C1P607</accession>
<dbReference type="EMBL" id="U00096">
    <property type="protein sequence ID" value="ACO59999.1"/>
    <property type="molecule type" value="Genomic_DNA"/>
</dbReference>
<dbReference type="EMBL" id="AP009048">
    <property type="status" value="NOT_ANNOTATED_CDS"/>
    <property type="molecule type" value="Genomic_DNA"/>
</dbReference>
<dbReference type="RefSeq" id="WP_010723109.1">
    <property type="nucleotide sequence ID" value="NZ_STEB01000002.1"/>
</dbReference>
<dbReference type="RefSeq" id="YP_002791247.1">
    <property type="nucleotide sequence ID" value="NC_000913.3"/>
</dbReference>
<dbReference type="EnsemblBacteria" id="ACO59999">
    <property type="protein sequence ID" value="ACO59999"/>
    <property type="gene ID" value="b4667"/>
</dbReference>
<dbReference type="GeneID" id="7751625"/>
<dbReference type="GeneID" id="93775118"/>
<dbReference type="KEGG" id="eco:b4667"/>
<dbReference type="InParanoid" id="C1P607"/>
<dbReference type="BioCyc" id="EcoCyc:MONOMER0-2859"/>
<dbReference type="PRO" id="PR:C1P607"/>
<dbReference type="Proteomes" id="UP000000625">
    <property type="component" value="Chromosome"/>
</dbReference>
<dbReference type="GO" id="GO:0012501">
    <property type="term" value="P:programmed cell death"/>
    <property type="evidence" value="ECO:0000315"/>
    <property type="project" value="EcoCyc"/>
</dbReference>
<dbReference type="InterPro" id="IPR025881">
    <property type="entry name" value="Toxin_Ibs"/>
</dbReference>
<dbReference type="Pfam" id="PF13956">
    <property type="entry name" value="Ibs_toxin"/>
    <property type="match status" value="1"/>
</dbReference>
<reference key="1">
    <citation type="journal article" date="1997" name="Science">
        <title>The complete genome sequence of Escherichia coli K-12.</title>
        <authorList>
            <person name="Blattner F.R."/>
            <person name="Plunkett G. III"/>
            <person name="Bloch C.A."/>
            <person name="Perna N.T."/>
            <person name="Burland V."/>
            <person name="Riley M."/>
            <person name="Collado-Vides J."/>
            <person name="Glasner J.D."/>
            <person name="Rode C.K."/>
            <person name="Mayhew G.F."/>
            <person name="Gregor J."/>
            <person name="Davis N.W."/>
            <person name="Kirkpatrick H.A."/>
            <person name="Goeden M.A."/>
            <person name="Rose D.J."/>
            <person name="Mau B."/>
            <person name="Shao Y."/>
        </authorList>
    </citation>
    <scope>NUCLEOTIDE SEQUENCE [LARGE SCALE GENOMIC DNA]</scope>
    <source>
        <strain>K12 / MG1655 / ATCC 47076</strain>
    </source>
</reference>
<reference key="2">
    <citation type="journal article" date="2006" name="Mol. Syst. Biol.">
        <title>Highly accurate genome sequences of Escherichia coli K-12 strains MG1655 and W3110.</title>
        <authorList>
            <person name="Hayashi K."/>
            <person name="Morooka N."/>
            <person name="Yamamoto Y."/>
            <person name="Fujita K."/>
            <person name="Isono K."/>
            <person name="Choi S."/>
            <person name="Ohtsubo E."/>
            <person name="Baba T."/>
            <person name="Wanner B.L."/>
            <person name="Mori H."/>
            <person name="Horiuchi T."/>
        </authorList>
    </citation>
    <scope>NUCLEOTIDE SEQUENCE [LARGE SCALE GENOMIC DNA]</scope>
    <source>
        <strain>K12 / W3110 / ATCC 27325 / DSM 5911</strain>
    </source>
</reference>
<reference key="3">
    <citation type="journal article" date="2008" name="Mol. Microbiol.">
        <title>Repression of small toxic protein synthesis by the Sib and OhsC small RNAs.</title>
        <authorList>
            <person name="Fozo E.M."/>
            <person name="Kawano M."/>
            <person name="Fontaine F."/>
            <person name="Kaya Y."/>
            <person name="Mendieta K.S."/>
            <person name="Jones K.L."/>
            <person name="Ocampo A."/>
            <person name="Rudd K.E."/>
            <person name="Storz G."/>
        </authorList>
    </citation>
    <scope>IDENTIFICATION</scope>
    <scope>FUNCTION</scope>
    <scope>INDUCTION</scope>
    <scope>OVEREXPRESSION</scope>
    <scope>DISRUPTION PHENOTYPE</scope>
    <source>
        <strain>K12 / MG1655 / ATCC 47076</strain>
    </source>
</reference>
<comment type="function">
    <text evidence="1">Toxic component of a type I toxin-antitoxin (TA) system. Overexpression causes cessation of growth.</text>
</comment>
<comment type="induction">
    <text evidence="1">The sibA sRNA probably represses expression of ibsA mRNA, either by destabilizing the transcript and/or preventing its translation. Expression of the proteinaceous toxin is controlled by antisense sRNA SibA.</text>
</comment>
<comment type="disruption phenotype">
    <text evidence="1">None seen.</text>
</comment>
<comment type="miscellaneous">
    <text>Part of the SIBa repeat region (formerly known as QUAD1a), encoded on the opposite strand from the sibA (formerly known as ryeC) RNA.</text>
</comment>
<comment type="similarity">
    <text evidence="2">Belongs to the Ibs toxic protein family.</text>
</comment>
<organism>
    <name type="scientific">Escherichia coli (strain K12)</name>
    <dbReference type="NCBI Taxonomy" id="83333"/>
    <lineage>
        <taxon>Bacteria</taxon>
        <taxon>Pseudomonadati</taxon>
        <taxon>Pseudomonadota</taxon>
        <taxon>Gammaproteobacteria</taxon>
        <taxon>Enterobacterales</taxon>
        <taxon>Enterobacteriaceae</taxon>
        <taxon>Escherichia</taxon>
    </lineage>
</organism>
<protein>
    <recommendedName>
        <fullName>Small toxic protein IbsA</fullName>
    </recommendedName>
</protein>
<keyword id="KW-1185">Reference proteome</keyword>
<keyword id="KW-1277">Toxin-antitoxin system</keyword>
<evidence type="ECO:0000269" key="1">
    <source>
    </source>
</evidence>
<evidence type="ECO:0000305" key="2"/>
<name>IBSA_ECOLI</name>
<sequence>MMKHVIILVILLVISFQAY</sequence>
<proteinExistence type="evidence at transcript level"/>